<feature type="chain" id="PRO_1000000756" description="UPF0060 membrane protein AAur_4166">
    <location>
        <begin position="1"/>
        <end position="112"/>
    </location>
</feature>
<feature type="transmembrane region" description="Helical" evidence="1">
    <location>
        <begin position="8"/>
        <end position="28"/>
    </location>
</feature>
<feature type="transmembrane region" description="Helical" evidence="1">
    <location>
        <begin position="33"/>
        <end position="53"/>
    </location>
</feature>
<feature type="transmembrane region" description="Helical" evidence="1">
    <location>
        <begin position="62"/>
        <end position="82"/>
    </location>
</feature>
<feature type="transmembrane region" description="Helical" evidence="1">
    <location>
        <begin position="91"/>
        <end position="111"/>
    </location>
</feature>
<proteinExistence type="inferred from homology"/>
<evidence type="ECO:0000255" key="1">
    <source>
        <dbReference type="HAMAP-Rule" id="MF_00010"/>
    </source>
</evidence>
<sequence length="112" mass="11914">MTILKTTILFVLAAVAEIGGAWLIWQAVREGKAWWWAGLGVVALGIYGFFAAFQPDAHFGRVLAAYGGVFIAGSLGWGMLMDGFRPDRWDVIGAAICIVGVGVIMFAPRPGG</sequence>
<protein>
    <recommendedName>
        <fullName evidence="1">UPF0060 membrane protein AAur_4166</fullName>
    </recommendedName>
</protein>
<accession>A1RC71</accession>
<dbReference type="EMBL" id="CP000474">
    <property type="protein sequence ID" value="ABM09668.1"/>
    <property type="molecule type" value="Genomic_DNA"/>
</dbReference>
<dbReference type="RefSeq" id="WP_011776756.1">
    <property type="nucleotide sequence ID" value="NC_008711.1"/>
</dbReference>
<dbReference type="SMR" id="A1RC71"/>
<dbReference type="STRING" id="290340.AAur_4166"/>
<dbReference type="DNASU" id="4639030"/>
<dbReference type="KEGG" id="aau:AAur_4166"/>
<dbReference type="eggNOG" id="COG1742">
    <property type="taxonomic scope" value="Bacteria"/>
</dbReference>
<dbReference type="HOGENOM" id="CLU_117653_0_1_11"/>
<dbReference type="OrthoDB" id="123240at2"/>
<dbReference type="Proteomes" id="UP000000637">
    <property type="component" value="Chromosome"/>
</dbReference>
<dbReference type="GO" id="GO:0005886">
    <property type="term" value="C:plasma membrane"/>
    <property type="evidence" value="ECO:0007669"/>
    <property type="project" value="UniProtKB-SubCell"/>
</dbReference>
<dbReference type="HAMAP" id="MF_00010">
    <property type="entry name" value="UPF0060"/>
    <property type="match status" value="1"/>
</dbReference>
<dbReference type="InterPro" id="IPR003844">
    <property type="entry name" value="UPF0060"/>
</dbReference>
<dbReference type="NCBIfam" id="NF002586">
    <property type="entry name" value="PRK02237.1"/>
    <property type="match status" value="1"/>
</dbReference>
<dbReference type="PANTHER" id="PTHR36116">
    <property type="entry name" value="UPF0060 MEMBRANE PROTEIN YNFA"/>
    <property type="match status" value="1"/>
</dbReference>
<dbReference type="PANTHER" id="PTHR36116:SF1">
    <property type="entry name" value="UPF0060 MEMBRANE PROTEIN YNFA"/>
    <property type="match status" value="1"/>
</dbReference>
<dbReference type="Pfam" id="PF02694">
    <property type="entry name" value="UPF0060"/>
    <property type="match status" value="1"/>
</dbReference>
<dbReference type="SUPFAM" id="SSF103481">
    <property type="entry name" value="Multidrug resistance efflux transporter EmrE"/>
    <property type="match status" value="1"/>
</dbReference>
<keyword id="KW-1003">Cell membrane</keyword>
<keyword id="KW-0472">Membrane</keyword>
<keyword id="KW-0812">Transmembrane</keyword>
<keyword id="KW-1133">Transmembrane helix</keyword>
<organism>
    <name type="scientific">Paenarthrobacter aurescens (strain TC1)</name>
    <dbReference type="NCBI Taxonomy" id="290340"/>
    <lineage>
        <taxon>Bacteria</taxon>
        <taxon>Bacillati</taxon>
        <taxon>Actinomycetota</taxon>
        <taxon>Actinomycetes</taxon>
        <taxon>Micrococcales</taxon>
        <taxon>Micrococcaceae</taxon>
        <taxon>Paenarthrobacter</taxon>
    </lineage>
</organism>
<gene>
    <name type="ordered locus">AAur_4166</name>
</gene>
<reference key="1">
    <citation type="journal article" date="2006" name="PLoS Genet.">
        <title>Secrets of soil survival revealed by the genome sequence of Arthrobacter aurescens TC1.</title>
        <authorList>
            <person name="Mongodin E.F."/>
            <person name="Shapir N."/>
            <person name="Daugherty S.C."/>
            <person name="DeBoy R.T."/>
            <person name="Emerson J.B."/>
            <person name="Shvartzbeyn A."/>
            <person name="Radune D."/>
            <person name="Vamathevan J."/>
            <person name="Riggs F."/>
            <person name="Grinberg V."/>
            <person name="Khouri H.M."/>
            <person name="Wackett L.P."/>
            <person name="Nelson K.E."/>
            <person name="Sadowsky M.J."/>
        </authorList>
    </citation>
    <scope>NUCLEOTIDE SEQUENCE [LARGE SCALE GENOMIC DNA]</scope>
    <source>
        <strain>TC1</strain>
    </source>
</reference>
<name>Y4166_PAEAT</name>
<comment type="subcellular location">
    <subcellularLocation>
        <location evidence="1">Cell membrane</location>
        <topology evidence="1">Multi-pass membrane protein</topology>
    </subcellularLocation>
</comment>
<comment type="similarity">
    <text evidence="1">Belongs to the UPF0060 family.</text>
</comment>